<protein>
    <recommendedName>
        <fullName evidence="1">Probable tRNA pseudouridine synthase B</fullName>
        <ecNumber evidence="1">5.4.99.25</ecNumber>
    </recommendedName>
    <alternativeName>
        <fullName evidence="1">tRNA pseudouridine(55) synthase</fullName>
        <shortName evidence="1">Psi55 synthase</shortName>
    </alternativeName>
    <alternativeName>
        <fullName evidence="1">tRNA pseudouridylate synthase</fullName>
    </alternativeName>
    <alternativeName>
        <fullName evidence="1">tRNA-uridine isomerase</fullName>
    </alternativeName>
</protein>
<keyword id="KW-0413">Isomerase</keyword>
<keyword id="KW-1185">Reference proteome</keyword>
<keyword id="KW-0819">tRNA processing</keyword>
<name>TRUB_NANEQ</name>
<proteinExistence type="inferred from homology"/>
<dbReference type="EC" id="5.4.99.25" evidence="1"/>
<dbReference type="EMBL" id="AE017199">
    <property type="protein sequence ID" value="AAR39298.1"/>
    <property type="molecule type" value="Genomic_DNA"/>
</dbReference>
<dbReference type="SMR" id="P60346"/>
<dbReference type="STRING" id="228908.NEQ454"/>
<dbReference type="EnsemblBacteria" id="AAR39298">
    <property type="protein sequence ID" value="AAR39298"/>
    <property type="gene ID" value="NEQ454"/>
</dbReference>
<dbReference type="KEGG" id="neq:NEQ454"/>
<dbReference type="PATRIC" id="fig|228908.8.peg.467"/>
<dbReference type="HOGENOM" id="CLU_032087_3_0_2"/>
<dbReference type="Proteomes" id="UP000000578">
    <property type="component" value="Chromosome"/>
</dbReference>
<dbReference type="GO" id="GO:0003723">
    <property type="term" value="F:RNA binding"/>
    <property type="evidence" value="ECO:0007669"/>
    <property type="project" value="InterPro"/>
</dbReference>
<dbReference type="GO" id="GO:0160148">
    <property type="term" value="F:tRNA pseudouridine(55) synthase activity"/>
    <property type="evidence" value="ECO:0007669"/>
    <property type="project" value="UniProtKB-EC"/>
</dbReference>
<dbReference type="GO" id="GO:0000495">
    <property type="term" value="P:box H/ACA sno(s)RNA 3'-end processing"/>
    <property type="evidence" value="ECO:0007669"/>
    <property type="project" value="TreeGrafter"/>
</dbReference>
<dbReference type="GO" id="GO:1990481">
    <property type="term" value="P:mRNA pseudouridine synthesis"/>
    <property type="evidence" value="ECO:0007669"/>
    <property type="project" value="TreeGrafter"/>
</dbReference>
<dbReference type="GO" id="GO:0031118">
    <property type="term" value="P:rRNA pseudouridine synthesis"/>
    <property type="evidence" value="ECO:0007669"/>
    <property type="project" value="TreeGrafter"/>
</dbReference>
<dbReference type="GO" id="GO:0031120">
    <property type="term" value="P:snRNA pseudouridine synthesis"/>
    <property type="evidence" value="ECO:0007669"/>
    <property type="project" value="TreeGrafter"/>
</dbReference>
<dbReference type="GO" id="GO:0031119">
    <property type="term" value="P:tRNA pseudouridine synthesis"/>
    <property type="evidence" value="ECO:0007669"/>
    <property type="project" value="UniProtKB-UniRule"/>
</dbReference>
<dbReference type="CDD" id="cd02572">
    <property type="entry name" value="PseudoU_synth_hDyskerin"/>
    <property type="match status" value="1"/>
</dbReference>
<dbReference type="CDD" id="cd21148">
    <property type="entry name" value="PUA_Cbf5"/>
    <property type="match status" value="1"/>
</dbReference>
<dbReference type="FunFam" id="3.30.2350.10:FF:000001">
    <property type="entry name" value="H/ACA ribonucleoprotein complex subunit CBF5"/>
    <property type="match status" value="1"/>
</dbReference>
<dbReference type="Gene3D" id="3.30.2350.10">
    <property type="entry name" value="Pseudouridine synthase"/>
    <property type="match status" value="1"/>
</dbReference>
<dbReference type="Gene3D" id="2.30.130.10">
    <property type="entry name" value="PUA domain"/>
    <property type="match status" value="1"/>
</dbReference>
<dbReference type="HAMAP" id="MF_01081">
    <property type="entry name" value="TruB_arch"/>
    <property type="match status" value="1"/>
</dbReference>
<dbReference type="InterPro" id="IPR012960">
    <property type="entry name" value="Dyskerin-like"/>
</dbReference>
<dbReference type="InterPro" id="IPR020103">
    <property type="entry name" value="PsdUridine_synth_cat_dom_sf"/>
</dbReference>
<dbReference type="InterPro" id="IPR002501">
    <property type="entry name" value="PsdUridine_synth_N"/>
</dbReference>
<dbReference type="InterPro" id="IPR002478">
    <property type="entry name" value="PUA"/>
</dbReference>
<dbReference type="InterPro" id="IPR015947">
    <property type="entry name" value="PUA-like_sf"/>
</dbReference>
<dbReference type="InterPro" id="IPR036974">
    <property type="entry name" value="PUA_sf"/>
</dbReference>
<dbReference type="InterPro" id="IPR004802">
    <property type="entry name" value="tRNA_PsdUridine_synth_B_fam"/>
</dbReference>
<dbReference type="InterPro" id="IPR026326">
    <property type="entry name" value="TruB_arch"/>
</dbReference>
<dbReference type="InterPro" id="IPR032819">
    <property type="entry name" value="TruB_C"/>
</dbReference>
<dbReference type="InterPro" id="IPR004521">
    <property type="entry name" value="Uncharacterised_CHP00451"/>
</dbReference>
<dbReference type="NCBIfam" id="TIGR00425">
    <property type="entry name" value="CBF5"/>
    <property type="match status" value="1"/>
</dbReference>
<dbReference type="NCBIfam" id="NF003280">
    <property type="entry name" value="PRK04270.1"/>
    <property type="match status" value="1"/>
</dbReference>
<dbReference type="NCBIfam" id="TIGR00451">
    <property type="entry name" value="unchar_dom_2"/>
    <property type="match status" value="1"/>
</dbReference>
<dbReference type="PANTHER" id="PTHR23127">
    <property type="entry name" value="CENTROMERE/MICROTUBULE BINDING PROTEIN CBF5"/>
    <property type="match status" value="1"/>
</dbReference>
<dbReference type="PANTHER" id="PTHR23127:SF0">
    <property type="entry name" value="H_ACA RIBONUCLEOPROTEIN COMPLEX SUBUNIT DKC1"/>
    <property type="match status" value="1"/>
</dbReference>
<dbReference type="Pfam" id="PF08068">
    <property type="entry name" value="DKCLD"/>
    <property type="match status" value="1"/>
</dbReference>
<dbReference type="Pfam" id="PF01472">
    <property type="entry name" value="PUA"/>
    <property type="match status" value="1"/>
</dbReference>
<dbReference type="Pfam" id="PF16198">
    <property type="entry name" value="TruB_C_2"/>
    <property type="match status" value="1"/>
</dbReference>
<dbReference type="Pfam" id="PF01509">
    <property type="entry name" value="TruB_N"/>
    <property type="match status" value="1"/>
</dbReference>
<dbReference type="SMART" id="SM01136">
    <property type="entry name" value="DKCLD"/>
    <property type="match status" value="1"/>
</dbReference>
<dbReference type="SMART" id="SM00359">
    <property type="entry name" value="PUA"/>
    <property type="match status" value="1"/>
</dbReference>
<dbReference type="SUPFAM" id="SSF55120">
    <property type="entry name" value="Pseudouridine synthase"/>
    <property type="match status" value="1"/>
</dbReference>
<dbReference type="SUPFAM" id="SSF88697">
    <property type="entry name" value="PUA domain-like"/>
    <property type="match status" value="1"/>
</dbReference>
<dbReference type="PROSITE" id="PS50890">
    <property type="entry name" value="PUA"/>
    <property type="match status" value="1"/>
</dbReference>
<feature type="chain" id="PRO_0000121964" description="Probable tRNA pseudouridine synthase B">
    <location>
        <begin position="1"/>
        <end position="348"/>
    </location>
</feature>
<feature type="domain" description="PUA" evidence="1">
    <location>
        <begin position="260"/>
        <end position="335"/>
    </location>
</feature>
<feature type="active site" description="Nucleophile" evidence="1">
    <location>
        <position position="93"/>
    </location>
</feature>
<sequence>MLCLSLMRIFCSKCLEEQECPLPWELEKYEIWVKKEAETNEKWGEDPYNRPIERLLKYSVINLDKPSGPTSHQVVAWVRDIVGVKAGHGGTLDPKVTGVLPIAIGEATKVLQTLLIAGKEYVALMHLHKEVSEKDIIKVMSKFVGTIIQTPPLRSAVKKRPRKKKVYCIKIIEIDGKDVLFRVSTQGGVYIRKLIHDIGVKLGVGAHMQELRRIKSGPFHENNSVYLQDIVDSLYFWKEEGNEEYIRKVFLPVEEAVKHLKKIYILDSAVAAIVHGANLAVPGIAKLYSNIKKGDLVSIHTLKGELVAIGIALMDSKEMLEKKRGIAVDIERVFMKPGLYPKMWVSQG</sequence>
<reference key="1">
    <citation type="journal article" date="2003" name="Proc. Natl. Acad. Sci. U.S.A.">
        <title>The genome of Nanoarchaeum equitans: insights into early archaeal evolution and derived parasitism.</title>
        <authorList>
            <person name="Waters E."/>
            <person name="Hohn M.J."/>
            <person name="Ahel I."/>
            <person name="Graham D.E."/>
            <person name="Adams M.D."/>
            <person name="Barnstead M."/>
            <person name="Beeson K.Y."/>
            <person name="Bibbs L."/>
            <person name="Bolanos R."/>
            <person name="Keller M."/>
            <person name="Kretz K."/>
            <person name="Lin X."/>
            <person name="Mathur E."/>
            <person name="Ni J."/>
            <person name="Podar M."/>
            <person name="Richardson T."/>
            <person name="Sutton G.G."/>
            <person name="Simon M."/>
            <person name="Soell D."/>
            <person name="Stetter K.O."/>
            <person name="Short J.M."/>
            <person name="Noorderwier M."/>
        </authorList>
    </citation>
    <scope>NUCLEOTIDE SEQUENCE [LARGE SCALE GENOMIC DNA]</scope>
    <source>
        <strain>Kin4-M</strain>
    </source>
</reference>
<organism>
    <name type="scientific">Nanoarchaeum equitans (strain Kin4-M)</name>
    <dbReference type="NCBI Taxonomy" id="228908"/>
    <lineage>
        <taxon>Archaea</taxon>
        <taxon>Nanobdellota</taxon>
        <taxon>Candidatus Nanoarchaeia</taxon>
        <taxon>Nanoarchaeales</taxon>
        <taxon>Nanoarchaeaceae</taxon>
        <taxon>Nanoarchaeum</taxon>
    </lineage>
</organism>
<evidence type="ECO:0000255" key="1">
    <source>
        <dbReference type="HAMAP-Rule" id="MF_01081"/>
    </source>
</evidence>
<comment type="function">
    <text evidence="1">Could be responsible for synthesis of pseudouridine from uracil-55 in the psi GC loop of transfer RNAs.</text>
</comment>
<comment type="catalytic activity">
    <reaction evidence="1">
        <text>uridine(55) in tRNA = pseudouridine(55) in tRNA</text>
        <dbReference type="Rhea" id="RHEA:42532"/>
        <dbReference type="Rhea" id="RHEA-COMP:10101"/>
        <dbReference type="Rhea" id="RHEA-COMP:10102"/>
        <dbReference type="ChEBI" id="CHEBI:65314"/>
        <dbReference type="ChEBI" id="CHEBI:65315"/>
        <dbReference type="EC" id="5.4.99.25"/>
    </reaction>
</comment>
<comment type="similarity">
    <text evidence="1">Belongs to the pseudouridine synthase TruB family. Type 2 subfamily.</text>
</comment>
<gene>
    <name evidence="1" type="primary">truB</name>
    <name type="ordered locus">NEQ454</name>
</gene>
<accession>P60346</accession>